<proteinExistence type="inferred from homology"/>
<comment type="subcellular location">
    <subcellularLocation>
        <location evidence="2">Cell membrane</location>
        <topology evidence="2">Multi-pass membrane protein</topology>
    </subcellularLocation>
</comment>
<comment type="similarity">
    <text evidence="2">Belongs to the UPF0382 family.</text>
</comment>
<sequence length="122" mass="13065">MKLFIILGALNAMMAVGTGAFGAHGLQGKISDHYLSVWEKATTYQMYHGLALLIIGVISGTTSINVNWAGWLIFAGIIFFSGSLYILVLTQIKVLGAITPIGGVLFIIGWIMLIIATFKFAG</sequence>
<evidence type="ECO:0000255" key="1"/>
<evidence type="ECO:0000305" key="2"/>
<protein>
    <recommendedName>
        <fullName>UPF0382 membrane protein SAOUHSC_00567</fullName>
    </recommendedName>
</protein>
<accession>Q2G0J5</accession>
<name>Y567_STAA8</name>
<organism>
    <name type="scientific">Staphylococcus aureus (strain NCTC 8325 / PS 47)</name>
    <dbReference type="NCBI Taxonomy" id="93061"/>
    <lineage>
        <taxon>Bacteria</taxon>
        <taxon>Bacillati</taxon>
        <taxon>Bacillota</taxon>
        <taxon>Bacilli</taxon>
        <taxon>Bacillales</taxon>
        <taxon>Staphylococcaceae</taxon>
        <taxon>Staphylococcus</taxon>
    </lineage>
</organism>
<reference key="1">
    <citation type="book" date="2006" name="Gram positive pathogens, 2nd edition">
        <title>The Staphylococcus aureus NCTC 8325 genome.</title>
        <editorList>
            <person name="Fischetti V."/>
            <person name="Novick R."/>
            <person name="Ferretti J."/>
            <person name="Portnoy D."/>
            <person name="Rood J."/>
        </editorList>
        <authorList>
            <person name="Gillaspy A.F."/>
            <person name="Worrell V."/>
            <person name="Orvis J."/>
            <person name="Roe B.A."/>
            <person name="Dyer D.W."/>
            <person name="Iandolo J.J."/>
        </authorList>
    </citation>
    <scope>NUCLEOTIDE SEQUENCE [LARGE SCALE GENOMIC DNA]</scope>
    <source>
        <strain>NCTC 8325 / PS 47</strain>
    </source>
</reference>
<dbReference type="EMBL" id="CP000253">
    <property type="protein sequence ID" value="ABD29712.1"/>
    <property type="molecule type" value="Genomic_DNA"/>
</dbReference>
<dbReference type="RefSeq" id="WP_000765183.1">
    <property type="nucleotide sequence ID" value="NZ_LS483365.1"/>
</dbReference>
<dbReference type="RefSeq" id="YP_499137.1">
    <property type="nucleotide sequence ID" value="NC_007795.1"/>
</dbReference>
<dbReference type="STRING" id="93061.SAOUHSC_00567"/>
<dbReference type="PaxDb" id="1280-SAXN108_0639"/>
<dbReference type="GeneID" id="3920610"/>
<dbReference type="KEGG" id="sao:SAOUHSC_00567"/>
<dbReference type="PATRIC" id="fig|93061.5.peg.511"/>
<dbReference type="eggNOG" id="COG2363">
    <property type="taxonomic scope" value="Bacteria"/>
</dbReference>
<dbReference type="HOGENOM" id="CLU_096548_3_3_9"/>
<dbReference type="OrthoDB" id="9802121at2"/>
<dbReference type="PRO" id="PR:Q2G0J5"/>
<dbReference type="Proteomes" id="UP000008816">
    <property type="component" value="Chromosome"/>
</dbReference>
<dbReference type="GO" id="GO:0005886">
    <property type="term" value="C:plasma membrane"/>
    <property type="evidence" value="ECO:0000318"/>
    <property type="project" value="GO_Central"/>
</dbReference>
<dbReference type="InterPro" id="IPR006696">
    <property type="entry name" value="DUF423"/>
</dbReference>
<dbReference type="PANTHER" id="PTHR43461">
    <property type="entry name" value="TRANSMEMBRANE PROTEIN 256"/>
    <property type="match status" value="1"/>
</dbReference>
<dbReference type="PANTHER" id="PTHR43461:SF1">
    <property type="entry name" value="TRANSMEMBRANE PROTEIN 256"/>
    <property type="match status" value="1"/>
</dbReference>
<dbReference type="Pfam" id="PF04241">
    <property type="entry name" value="DUF423"/>
    <property type="match status" value="1"/>
</dbReference>
<feature type="chain" id="PRO_0000249036" description="UPF0382 membrane protein SAOUHSC_00567">
    <location>
        <begin position="1"/>
        <end position="122"/>
    </location>
</feature>
<feature type="transmembrane region" description="Helical" evidence="1">
    <location>
        <begin position="3"/>
        <end position="23"/>
    </location>
</feature>
<feature type="transmembrane region" description="Helical" evidence="1">
    <location>
        <begin position="46"/>
        <end position="66"/>
    </location>
</feature>
<feature type="transmembrane region" description="Helical" evidence="1">
    <location>
        <begin position="69"/>
        <end position="89"/>
    </location>
</feature>
<feature type="transmembrane region" description="Helical" evidence="1">
    <location>
        <begin position="98"/>
        <end position="118"/>
    </location>
</feature>
<keyword id="KW-1003">Cell membrane</keyword>
<keyword id="KW-0472">Membrane</keyword>
<keyword id="KW-1185">Reference proteome</keyword>
<keyword id="KW-0812">Transmembrane</keyword>
<keyword id="KW-1133">Transmembrane helix</keyword>
<gene>
    <name type="ordered locus">SAOUHSC_00567</name>
</gene>